<protein>
    <recommendedName>
        <fullName evidence="1">Deoxyuridine 5'-triphosphate nucleotidohydrolase</fullName>
        <shortName evidence="1">dUTPase</shortName>
        <ecNumber evidence="1">3.6.1.23</ecNumber>
    </recommendedName>
    <alternativeName>
        <fullName evidence="1">dUTP pyrophosphatase</fullName>
    </alternativeName>
</protein>
<accession>B3CSS7</accession>
<name>DUT_ORITI</name>
<comment type="function">
    <text evidence="1">This enzyme is involved in nucleotide metabolism: it produces dUMP, the immediate precursor of thymidine nucleotides and it decreases the intracellular concentration of dUTP so that uracil cannot be incorporated into DNA.</text>
</comment>
<comment type="catalytic activity">
    <reaction evidence="1">
        <text>dUTP + H2O = dUMP + diphosphate + H(+)</text>
        <dbReference type="Rhea" id="RHEA:10248"/>
        <dbReference type="ChEBI" id="CHEBI:15377"/>
        <dbReference type="ChEBI" id="CHEBI:15378"/>
        <dbReference type="ChEBI" id="CHEBI:33019"/>
        <dbReference type="ChEBI" id="CHEBI:61555"/>
        <dbReference type="ChEBI" id="CHEBI:246422"/>
        <dbReference type="EC" id="3.6.1.23"/>
    </reaction>
</comment>
<comment type="cofactor">
    <cofactor evidence="1">
        <name>Mg(2+)</name>
        <dbReference type="ChEBI" id="CHEBI:18420"/>
    </cofactor>
</comment>
<comment type="pathway">
    <text evidence="1">Pyrimidine metabolism; dUMP biosynthesis; dUMP from dCTP (dUTP route): step 2/2.</text>
</comment>
<comment type="similarity">
    <text evidence="1">Belongs to the dUTPase family.</text>
</comment>
<organism>
    <name type="scientific">Orientia tsutsugamushi (strain Ikeda)</name>
    <name type="common">Rickettsia tsutsugamushi</name>
    <dbReference type="NCBI Taxonomy" id="334380"/>
    <lineage>
        <taxon>Bacteria</taxon>
        <taxon>Pseudomonadati</taxon>
        <taxon>Pseudomonadota</taxon>
        <taxon>Alphaproteobacteria</taxon>
        <taxon>Rickettsiales</taxon>
        <taxon>Rickettsiaceae</taxon>
        <taxon>Rickettsieae</taxon>
        <taxon>Orientia</taxon>
    </lineage>
</organism>
<reference key="1">
    <citation type="journal article" date="2008" name="DNA Res.">
        <title>The whole-genome sequencing of the obligate intracellular bacterium Orientia tsutsugamushi revealed massive gene amplification during reductive genome evolution.</title>
        <authorList>
            <person name="Nakayama K."/>
            <person name="Yamashita A."/>
            <person name="Kurokawa K."/>
            <person name="Morimoto T."/>
            <person name="Ogawa M."/>
            <person name="Fukuhara M."/>
            <person name="Urakami H."/>
            <person name="Ohnishi M."/>
            <person name="Uchiyama I."/>
            <person name="Ogura Y."/>
            <person name="Ooka T."/>
            <person name="Oshima K."/>
            <person name="Tamura A."/>
            <person name="Hattori M."/>
            <person name="Hayashi T."/>
        </authorList>
    </citation>
    <scope>NUCLEOTIDE SEQUENCE [LARGE SCALE GENOMIC DNA]</scope>
    <source>
        <strain>Ikeda</strain>
    </source>
</reference>
<sequence>MKVKIKQIYQFEGTSSLPAYSTNGSAGMDLYAAIASPMIIKPHETALVPAGIAISLPYGYEAQIRSRSGLASKFGVIVLNSPGTIDSDYRGELKIIMINLGQKDFQLTPAMRIAQMVIAKYEVISWEIVDDLDETERGEKGFGSSGLK</sequence>
<feature type="chain" id="PRO_1000094975" description="Deoxyuridine 5'-triphosphate nucleotidohydrolase">
    <location>
        <begin position="1"/>
        <end position="148"/>
    </location>
</feature>
<feature type="binding site" evidence="1">
    <location>
        <begin position="67"/>
        <end position="69"/>
    </location>
    <ligand>
        <name>substrate</name>
    </ligand>
</feature>
<feature type="binding site" evidence="1">
    <location>
        <position position="80"/>
    </location>
    <ligand>
        <name>substrate</name>
    </ligand>
</feature>
<feature type="binding site" evidence="1">
    <location>
        <begin position="84"/>
        <end position="86"/>
    </location>
    <ligand>
        <name>substrate</name>
    </ligand>
</feature>
<feature type="binding site" evidence="1">
    <location>
        <position position="94"/>
    </location>
    <ligand>
        <name>substrate</name>
    </ligand>
</feature>
<keyword id="KW-0378">Hydrolase</keyword>
<keyword id="KW-0460">Magnesium</keyword>
<keyword id="KW-0479">Metal-binding</keyword>
<keyword id="KW-0546">Nucleotide metabolism</keyword>
<gene>
    <name evidence="1" type="primary">dut</name>
    <name type="ordered locus">OTT_0966</name>
</gene>
<evidence type="ECO:0000255" key="1">
    <source>
        <dbReference type="HAMAP-Rule" id="MF_00116"/>
    </source>
</evidence>
<proteinExistence type="inferred from homology"/>
<dbReference type="EC" id="3.6.1.23" evidence="1"/>
<dbReference type="EMBL" id="AP008981">
    <property type="protein sequence ID" value="BAG40424.1"/>
    <property type="molecule type" value="Genomic_DNA"/>
</dbReference>
<dbReference type="RefSeq" id="WP_012461549.1">
    <property type="nucleotide sequence ID" value="NC_010793.1"/>
</dbReference>
<dbReference type="SMR" id="B3CSS7"/>
<dbReference type="KEGG" id="ott:OTT_0966"/>
<dbReference type="HOGENOM" id="CLU_068508_1_0_5"/>
<dbReference type="OrthoDB" id="9809956at2"/>
<dbReference type="UniPathway" id="UPA00610">
    <property type="reaction ID" value="UER00666"/>
</dbReference>
<dbReference type="Proteomes" id="UP000001033">
    <property type="component" value="Chromosome"/>
</dbReference>
<dbReference type="GO" id="GO:0004170">
    <property type="term" value="F:dUTP diphosphatase activity"/>
    <property type="evidence" value="ECO:0007669"/>
    <property type="project" value="UniProtKB-UniRule"/>
</dbReference>
<dbReference type="GO" id="GO:0000287">
    <property type="term" value="F:magnesium ion binding"/>
    <property type="evidence" value="ECO:0007669"/>
    <property type="project" value="UniProtKB-UniRule"/>
</dbReference>
<dbReference type="GO" id="GO:0006226">
    <property type="term" value="P:dUMP biosynthetic process"/>
    <property type="evidence" value="ECO:0007669"/>
    <property type="project" value="UniProtKB-UniRule"/>
</dbReference>
<dbReference type="GO" id="GO:0046081">
    <property type="term" value="P:dUTP catabolic process"/>
    <property type="evidence" value="ECO:0007669"/>
    <property type="project" value="InterPro"/>
</dbReference>
<dbReference type="CDD" id="cd07557">
    <property type="entry name" value="trimeric_dUTPase"/>
    <property type="match status" value="1"/>
</dbReference>
<dbReference type="FunFam" id="2.70.40.10:FF:000002">
    <property type="entry name" value="dUTP diphosphatase"/>
    <property type="match status" value="1"/>
</dbReference>
<dbReference type="Gene3D" id="2.70.40.10">
    <property type="match status" value="1"/>
</dbReference>
<dbReference type="HAMAP" id="MF_00116">
    <property type="entry name" value="dUTPase_bact"/>
    <property type="match status" value="1"/>
</dbReference>
<dbReference type="InterPro" id="IPR008181">
    <property type="entry name" value="dUTPase"/>
</dbReference>
<dbReference type="InterPro" id="IPR029054">
    <property type="entry name" value="dUTPase-like"/>
</dbReference>
<dbReference type="InterPro" id="IPR036157">
    <property type="entry name" value="dUTPase-like_sf"/>
</dbReference>
<dbReference type="InterPro" id="IPR033704">
    <property type="entry name" value="dUTPase_trimeric"/>
</dbReference>
<dbReference type="NCBIfam" id="TIGR00576">
    <property type="entry name" value="dut"/>
    <property type="match status" value="1"/>
</dbReference>
<dbReference type="NCBIfam" id="NF001862">
    <property type="entry name" value="PRK00601.1"/>
    <property type="match status" value="1"/>
</dbReference>
<dbReference type="PANTHER" id="PTHR11241">
    <property type="entry name" value="DEOXYURIDINE 5'-TRIPHOSPHATE NUCLEOTIDOHYDROLASE"/>
    <property type="match status" value="1"/>
</dbReference>
<dbReference type="PANTHER" id="PTHR11241:SF0">
    <property type="entry name" value="DEOXYURIDINE 5'-TRIPHOSPHATE NUCLEOTIDOHYDROLASE"/>
    <property type="match status" value="1"/>
</dbReference>
<dbReference type="Pfam" id="PF00692">
    <property type="entry name" value="dUTPase"/>
    <property type="match status" value="1"/>
</dbReference>
<dbReference type="SUPFAM" id="SSF51283">
    <property type="entry name" value="dUTPase-like"/>
    <property type="match status" value="1"/>
</dbReference>